<organism>
    <name type="scientific">Bacillus phage phi105</name>
    <name type="common">Bacteriophage phi-105</name>
    <dbReference type="NCBI Taxonomy" id="10717"/>
    <lineage>
        <taxon>Viruses</taxon>
        <taxon>Duplodnaviria</taxon>
        <taxon>Heunggongvirae</taxon>
        <taxon>Uroviricota</taxon>
        <taxon>Caudoviricetes</taxon>
        <taxon>Spizizenvirus</taxon>
        <taxon>Spizizenvirus sv105</taxon>
    </lineage>
</organism>
<feature type="chain" id="PRO_0000077728" description="Uncharacterized immunity region protein 11">
    <location>
        <begin position="1"/>
        <end position="57"/>
    </location>
</feature>
<organismHost>
    <name type="scientific">Bacillus subtilis</name>
    <dbReference type="NCBI Taxonomy" id="1423"/>
</organismHost>
<name>YIMB_BPPH1</name>
<dbReference type="EMBL" id="M11920">
    <property type="protein sequence ID" value="AAA88398.1"/>
    <property type="molecule type" value="Genomic_DNA"/>
</dbReference>
<dbReference type="PIR" id="A27234">
    <property type="entry name" value="IMBP11"/>
</dbReference>
<protein>
    <recommendedName>
        <fullName>Uncharacterized immunity region protein 11</fullName>
    </recommendedName>
</protein>
<reference key="1">
    <citation type="journal article" date="1985" name="Gene">
        <title>Nucleotide sequence of the immunity region of Bacillus subtilis bacteriophage phi 105: identification of the repressor gene and its mRNA and protein products.</title>
        <authorList>
            <person name="Cully D.F."/>
            <person name="Garro A.J."/>
        </authorList>
    </citation>
    <scope>NUCLEOTIDE SEQUENCE [GENOMIC DNA]</scope>
</reference>
<accession>P10434</accession>
<sequence>MQYAFSFSFWADIEYPSFACSSVETLTYIPTFFGVFSSIKFMIIYPPFLETYVLFSG</sequence>
<proteinExistence type="predicted"/>